<keyword id="KW-0002">3D-structure</keyword>
<keyword id="KW-0066">ATP synthesis</keyword>
<keyword id="KW-0067">ATP-binding</keyword>
<keyword id="KW-0997">Cell inner membrane</keyword>
<keyword id="KW-1003">Cell membrane</keyword>
<keyword id="KW-0139">CF(1)</keyword>
<keyword id="KW-0375">Hydrogen ion transport</keyword>
<keyword id="KW-0406">Ion transport</keyword>
<keyword id="KW-0472">Membrane</keyword>
<keyword id="KW-0547">Nucleotide-binding</keyword>
<keyword id="KW-1278">Translocase</keyword>
<keyword id="KW-0813">Transport</keyword>
<proteinExistence type="evidence at protein level"/>
<sequence>MQLNSTEISELIKQRIAQFNVVSEAHNEGTIVSVSDGVIRIHGLADCMQGEMISLPGNRYAIALNLERDSVGAVVMGPYADLAEGMKVKCTGRILEVPVGRGLLGRVVNTLGAPIDGKGPLDHDGFSAVEAIAPGVIERQSVDQPVQTGYKAVDSMIPIGRGQRELIIGDRQTGKTALAIDAIINQRDSGIKCIYVAIGQKASTISNVVRKLEEHGALANTIVVVATASESAALQYLAPYAGCAMGEYFRDRGEDALIIYDDLSKQAVAYRQISLLLRRPPGREAFPGDVFYLHSRLLERAARVNAEYVEAFTKGEVKGKTGSLTALPIIETQAGDVSAFVPTNVISITDGQIFLETNLFNAGIRPAVNPGISVSRVGGAAQTKIMKKLSGGIRTALAQYRELAAFSQFASDLDDATRKQLDHGQKVTELLKQKQYAPMSVAQQSLVLFAAERGYLADVELSKIGSFEAALLAYVDRDHAPLMQEINQTGGYNDEIEGKLKGILDSFKATQSW</sequence>
<accession>Q0SYU2</accession>
<organism>
    <name type="scientific">Shigella flexneri serotype 5b (strain 8401)</name>
    <dbReference type="NCBI Taxonomy" id="373384"/>
    <lineage>
        <taxon>Bacteria</taxon>
        <taxon>Pseudomonadati</taxon>
        <taxon>Pseudomonadota</taxon>
        <taxon>Gammaproteobacteria</taxon>
        <taxon>Enterobacterales</taxon>
        <taxon>Enterobacteriaceae</taxon>
        <taxon>Shigella</taxon>
    </lineage>
</organism>
<dbReference type="EC" id="7.1.2.2" evidence="1"/>
<dbReference type="EMBL" id="CP000266">
    <property type="protein sequence ID" value="ABF05773.1"/>
    <property type="molecule type" value="Genomic_DNA"/>
</dbReference>
<dbReference type="RefSeq" id="WP_001176745.1">
    <property type="nucleotide sequence ID" value="NC_008258.1"/>
</dbReference>
<dbReference type="PDB" id="2A7U">
    <property type="method" value="NMR"/>
    <property type="chains" value="A=1-22"/>
</dbReference>
<dbReference type="PDBsum" id="2A7U"/>
<dbReference type="SMR" id="Q0SYU2"/>
<dbReference type="GeneID" id="93778233"/>
<dbReference type="KEGG" id="sfv:SFV_3760"/>
<dbReference type="HOGENOM" id="CLU_010091_2_1_6"/>
<dbReference type="Proteomes" id="UP000000659">
    <property type="component" value="Chromosome"/>
</dbReference>
<dbReference type="GO" id="GO:0005886">
    <property type="term" value="C:plasma membrane"/>
    <property type="evidence" value="ECO:0007669"/>
    <property type="project" value="UniProtKB-SubCell"/>
</dbReference>
<dbReference type="GO" id="GO:0045259">
    <property type="term" value="C:proton-transporting ATP synthase complex"/>
    <property type="evidence" value="ECO:0007669"/>
    <property type="project" value="UniProtKB-KW"/>
</dbReference>
<dbReference type="GO" id="GO:0043531">
    <property type="term" value="F:ADP binding"/>
    <property type="evidence" value="ECO:0007669"/>
    <property type="project" value="TreeGrafter"/>
</dbReference>
<dbReference type="GO" id="GO:0005524">
    <property type="term" value="F:ATP binding"/>
    <property type="evidence" value="ECO:0007669"/>
    <property type="project" value="UniProtKB-UniRule"/>
</dbReference>
<dbReference type="GO" id="GO:0046933">
    <property type="term" value="F:proton-transporting ATP synthase activity, rotational mechanism"/>
    <property type="evidence" value="ECO:0007669"/>
    <property type="project" value="UniProtKB-UniRule"/>
</dbReference>
<dbReference type="CDD" id="cd18113">
    <property type="entry name" value="ATP-synt_F1_alpha_C"/>
    <property type="match status" value="1"/>
</dbReference>
<dbReference type="CDD" id="cd18116">
    <property type="entry name" value="ATP-synt_F1_alpha_N"/>
    <property type="match status" value="1"/>
</dbReference>
<dbReference type="CDD" id="cd01132">
    <property type="entry name" value="F1-ATPase_alpha_CD"/>
    <property type="match status" value="1"/>
</dbReference>
<dbReference type="FunFam" id="1.20.150.20:FF:000001">
    <property type="entry name" value="ATP synthase subunit alpha"/>
    <property type="match status" value="1"/>
</dbReference>
<dbReference type="FunFam" id="2.40.30.20:FF:000001">
    <property type="entry name" value="ATP synthase subunit alpha"/>
    <property type="match status" value="1"/>
</dbReference>
<dbReference type="FunFam" id="3.40.50.300:FF:000002">
    <property type="entry name" value="ATP synthase subunit alpha"/>
    <property type="match status" value="1"/>
</dbReference>
<dbReference type="Gene3D" id="2.40.30.20">
    <property type="match status" value="1"/>
</dbReference>
<dbReference type="Gene3D" id="1.20.150.20">
    <property type="entry name" value="ATP synthase alpha/beta chain, C-terminal domain"/>
    <property type="match status" value="1"/>
</dbReference>
<dbReference type="Gene3D" id="3.40.50.300">
    <property type="entry name" value="P-loop containing nucleotide triphosphate hydrolases"/>
    <property type="match status" value="1"/>
</dbReference>
<dbReference type="HAMAP" id="MF_01346">
    <property type="entry name" value="ATP_synth_alpha_bact"/>
    <property type="match status" value="1"/>
</dbReference>
<dbReference type="InterPro" id="IPR023366">
    <property type="entry name" value="ATP_synth_asu-like_sf"/>
</dbReference>
<dbReference type="InterPro" id="IPR000793">
    <property type="entry name" value="ATP_synth_asu_C"/>
</dbReference>
<dbReference type="InterPro" id="IPR038376">
    <property type="entry name" value="ATP_synth_asu_C_sf"/>
</dbReference>
<dbReference type="InterPro" id="IPR033732">
    <property type="entry name" value="ATP_synth_F1_a_nt-bd_dom"/>
</dbReference>
<dbReference type="InterPro" id="IPR005294">
    <property type="entry name" value="ATP_synth_F1_asu"/>
</dbReference>
<dbReference type="InterPro" id="IPR020003">
    <property type="entry name" value="ATPase_a/bsu_AS"/>
</dbReference>
<dbReference type="InterPro" id="IPR004100">
    <property type="entry name" value="ATPase_F1/V1/A1_a/bsu_N"/>
</dbReference>
<dbReference type="InterPro" id="IPR036121">
    <property type="entry name" value="ATPase_F1/V1/A1_a/bsu_N_sf"/>
</dbReference>
<dbReference type="InterPro" id="IPR000194">
    <property type="entry name" value="ATPase_F1/V1/A1_a/bsu_nucl-bd"/>
</dbReference>
<dbReference type="InterPro" id="IPR027417">
    <property type="entry name" value="P-loop_NTPase"/>
</dbReference>
<dbReference type="NCBIfam" id="TIGR00962">
    <property type="entry name" value="atpA"/>
    <property type="match status" value="1"/>
</dbReference>
<dbReference type="NCBIfam" id="NF009884">
    <property type="entry name" value="PRK13343.1"/>
    <property type="match status" value="1"/>
</dbReference>
<dbReference type="PANTHER" id="PTHR48082">
    <property type="entry name" value="ATP SYNTHASE SUBUNIT ALPHA, MITOCHONDRIAL"/>
    <property type="match status" value="1"/>
</dbReference>
<dbReference type="PANTHER" id="PTHR48082:SF2">
    <property type="entry name" value="ATP SYNTHASE SUBUNIT ALPHA, MITOCHONDRIAL"/>
    <property type="match status" value="1"/>
</dbReference>
<dbReference type="Pfam" id="PF00006">
    <property type="entry name" value="ATP-synt_ab"/>
    <property type="match status" value="1"/>
</dbReference>
<dbReference type="Pfam" id="PF00306">
    <property type="entry name" value="ATP-synt_ab_C"/>
    <property type="match status" value="1"/>
</dbReference>
<dbReference type="Pfam" id="PF02874">
    <property type="entry name" value="ATP-synt_ab_N"/>
    <property type="match status" value="1"/>
</dbReference>
<dbReference type="SUPFAM" id="SSF47917">
    <property type="entry name" value="C-terminal domain of alpha and beta subunits of F1 ATP synthase"/>
    <property type="match status" value="1"/>
</dbReference>
<dbReference type="SUPFAM" id="SSF50615">
    <property type="entry name" value="N-terminal domain of alpha and beta subunits of F1 ATP synthase"/>
    <property type="match status" value="1"/>
</dbReference>
<dbReference type="SUPFAM" id="SSF52540">
    <property type="entry name" value="P-loop containing nucleoside triphosphate hydrolases"/>
    <property type="match status" value="1"/>
</dbReference>
<dbReference type="PROSITE" id="PS00152">
    <property type="entry name" value="ATPASE_ALPHA_BETA"/>
    <property type="match status" value="1"/>
</dbReference>
<gene>
    <name evidence="1" type="primary">atpA</name>
    <name type="ordered locus">SFV_3760</name>
</gene>
<comment type="function">
    <text evidence="1">Produces ATP from ADP in the presence of a proton gradient across the membrane. The alpha chain is a regulatory subunit.</text>
</comment>
<comment type="catalytic activity">
    <reaction evidence="1">
        <text>ATP + H2O + 4 H(+)(in) = ADP + phosphate + 5 H(+)(out)</text>
        <dbReference type="Rhea" id="RHEA:57720"/>
        <dbReference type="ChEBI" id="CHEBI:15377"/>
        <dbReference type="ChEBI" id="CHEBI:15378"/>
        <dbReference type="ChEBI" id="CHEBI:30616"/>
        <dbReference type="ChEBI" id="CHEBI:43474"/>
        <dbReference type="ChEBI" id="CHEBI:456216"/>
        <dbReference type="EC" id="7.1.2.2"/>
    </reaction>
</comment>
<comment type="subunit">
    <text evidence="1">F-type ATPases have 2 components, CF(1) - the catalytic core - and CF(0) - the membrane proton channel. CF(1) has five subunits: alpha(3), beta(3), gamma(1), delta(1), epsilon(1). CF(0) has three main subunits: a(1), b(2) and c(9-12). The alpha and beta chains form an alternating ring which encloses part of the gamma chain. CF(1) is attached to CF(0) by a central stalk formed by the gamma and epsilon chains, while a peripheral stalk is formed by the delta and b chains.</text>
</comment>
<comment type="subcellular location">
    <subcellularLocation>
        <location evidence="1">Cell inner membrane</location>
        <topology evidence="1">Peripheral membrane protein</topology>
    </subcellularLocation>
</comment>
<comment type="similarity">
    <text evidence="1">Belongs to the ATPase alpha/beta chains family.</text>
</comment>
<protein>
    <recommendedName>
        <fullName evidence="1">ATP synthase subunit alpha</fullName>
        <ecNumber evidence="1">7.1.2.2</ecNumber>
    </recommendedName>
    <alternativeName>
        <fullName evidence="1">ATP synthase F1 sector subunit alpha</fullName>
    </alternativeName>
    <alternativeName>
        <fullName evidence="1">F-ATPase subunit alpha</fullName>
    </alternativeName>
</protein>
<name>ATPA_SHIF8</name>
<feature type="chain" id="PRO_0000302703" description="ATP synthase subunit alpha">
    <location>
        <begin position="1"/>
        <end position="513"/>
    </location>
</feature>
<feature type="binding site" evidence="1">
    <location>
        <begin position="169"/>
        <end position="176"/>
    </location>
    <ligand>
        <name>ATP</name>
        <dbReference type="ChEBI" id="CHEBI:30616"/>
    </ligand>
</feature>
<feature type="site" description="Required for activity" evidence="1">
    <location>
        <position position="373"/>
    </location>
</feature>
<reference key="1">
    <citation type="journal article" date="2006" name="BMC Genomics">
        <title>Complete genome sequence of Shigella flexneri 5b and comparison with Shigella flexneri 2a.</title>
        <authorList>
            <person name="Nie H."/>
            <person name="Yang F."/>
            <person name="Zhang X."/>
            <person name="Yang J."/>
            <person name="Chen L."/>
            <person name="Wang J."/>
            <person name="Xiong Z."/>
            <person name="Peng J."/>
            <person name="Sun L."/>
            <person name="Dong J."/>
            <person name="Xue Y."/>
            <person name="Xu X."/>
            <person name="Chen S."/>
            <person name="Yao Z."/>
            <person name="Shen Y."/>
            <person name="Jin Q."/>
        </authorList>
    </citation>
    <scope>NUCLEOTIDE SEQUENCE [LARGE SCALE GENOMIC DNA]</scope>
    <source>
        <strain>8401</strain>
    </source>
</reference>
<evidence type="ECO:0000255" key="1">
    <source>
        <dbReference type="HAMAP-Rule" id="MF_01346"/>
    </source>
</evidence>